<sequence>MASYEAVIGLEVHAQLRTRSKLFCSCSTAFGADPNAHVCEVCAGMPGVLPVLNEKAVEFAARMGIAVGCTVNRTSVFARKNYFYPDLPKGYQISQYEQPICEHGHLDISVGDAVKRIGITRIHLEDDAGKNIHSAGENVSYVDLNRTGVPLIEIVSEPDLRSAEEAVAYLKALRAIVVHLGICDGNMEEGSFRCDANVSLRPRGAAEFGTRAELKNLNSFRHVQRAIEYEISRQADLLDDGDKVVQETRLYDSVKNITVSMRGKEEAHDYRYFPDPDLIPIHIDEARLAEWQATLPELPQARLERFMSSFGLSAQDAEVLTAERDHAEFFEAAVKLYDQPRKIANMMLGPLQRELNQRGTSLAVSAMRPEALAELVRIIDAGLISAKIGNDVFGELFENGAMPEAFVRERGLVQISDTSAIEQAVDEVIAENPAEVEAYRGGKTKLVSFFVGQVMRKTRGKANPALVNELLASKLG</sequence>
<reference key="1">
    <citation type="journal article" date="2004" name="Nat. Biotechnol.">
        <title>The genome sequence of the anaerobic, sulfate-reducing bacterium Desulfovibrio vulgaris Hildenborough.</title>
        <authorList>
            <person name="Heidelberg J.F."/>
            <person name="Seshadri R."/>
            <person name="Haveman S.A."/>
            <person name="Hemme C.L."/>
            <person name="Paulsen I.T."/>
            <person name="Kolonay J.F."/>
            <person name="Eisen J.A."/>
            <person name="Ward N.L."/>
            <person name="Methe B.A."/>
            <person name="Brinkac L.M."/>
            <person name="Daugherty S.C."/>
            <person name="DeBoy R.T."/>
            <person name="Dodson R.J."/>
            <person name="Durkin A.S."/>
            <person name="Madupu R."/>
            <person name="Nelson W.C."/>
            <person name="Sullivan S.A."/>
            <person name="Fouts D.E."/>
            <person name="Haft D.H."/>
            <person name="Selengut J."/>
            <person name="Peterson J.D."/>
            <person name="Davidsen T.M."/>
            <person name="Zafar N."/>
            <person name="Zhou L."/>
            <person name="Radune D."/>
            <person name="Dimitrov G."/>
            <person name="Hance M."/>
            <person name="Tran K."/>
            <person name="Khouri H.M."/>
            <person name="Gill J."/>
            <person name="Utterback T.R."/>
            <person name="Feldblyum T.V."/>
            <person name="Wall J.D."/>
            <person name="Voordouw G."/>
            <person name="Fraser C.M."/>
        </authorList>
    </citation>
    <scope>NUCLEOTIDE SEQUENCE [LARGE SCALE GENOMIC DNA]</scope>
    <source>
        <strain>ATCC 29579 / DSM 644 / CCUG 34227 / NCIMB 8303 / VKM B-1760 / Hildenborough</strain>
    </source>
</reference>
<proteinExistence type="evidence at protein level"/>
<comment type="function">
    <text evidence="1">Allows the formation of correctly charged Asn-tRNA(Asn) or Gln-tRNA(Gln) through the transamidation of misacylated Asp-tRNA(Asn) or Glu-tRNA(Gln) in organisms which lack either or both of asparaginyl-tRNA or glutaminyl-tRNA synthetases. The reaction takes place in the presence of glutamine and ATP through an activated phospho-Asp-tRNA(Asn) or phospho-Glu-tRNA(Gln).</text>
</comment>
<comment type="catalytic activity">
    <reaction evidence="1">
        <text>L-glutamyl-tRNA(Gln) + L-glutamine + ATP + H2O = L-glutaminyl-tRNA(Gln) + L-glutamate + ADP + phosphate + H(+)</text>
        <dbReference type="Rhea" id="RHEA:17521"/>
        <dbReference type="Rhea" id="RHEA-COMP:9681"/>
        <dbReference type="Rhea" id="RHEA-COMP:9684"/>
        <dbReference type="ChEBI" id="CHEBI:15377"/>
        <dbReference type="ChEBI" id="CHEBI:15378"/>
        <dbReference type="ChEBI" id="CHEBI:29985"/>
        <dbReference type="ChEBI" id="CHEBI:30616"/>
        <dbReference type="ChEBI" id="CHEBI:43474"/>
        <dbReference type="ChEBI" id="CHEBI:58359"/>
        <dbReference type="ChEBI" id="CHEBI:78520"/>
        <dbReference type="ChEBI" id="CHEBI:78521"/>
        <dbReference type="ChEBI" id="CHEBI:456216"/>
    </reaction>
</comment>
<comment type="catalytic activity">
    <reaction evidence="1">
        <text>L-aspartyl-tRNA(Asn) + L-glutamine + ATP + H2O = L-asparaginyl-tRNA(Asn) + L-glutamate + ADP + phosphate + 2 H(+)</text>
        <dbReference type="Rhea" id="RHEA:14513"/>
        <dbReference type="Rhea" id="RHEA-COMP:9674"/>
        <dbReference type="Rhea" id="RHEA-COMP:9677"/>
        <dbReference type="ChEBI" id="CHEBI:15377"/>
        <dbReference type="ChEBI" id="CHEBI:15378"/>
        <dbReference type="ChEBI" id="CHEBI:29985"/>
        <dbReference type="ChEBI" id="CHEBI:30616"/>
        <dbReference type="ChEBI" id="CHEBI:43474"/>
        <dbReference type="ChEBI" id="CHEBI:58359"/>
        <dbReference type="ChEBI" id="CHEBI:78515"/>
        <dbReference type="ChEBI" id="CHEBI:78516"/>
        <dbReference type="ChEBI" id="CHEBI:456216"/>
    </reaction>
</comment>
<comment type="subunit">
    <text evidence="1">Heterotrimer of A, B and C subunits.</text>
</comment>
<comment type="interaction">
    <interactant intactId="EBI-10068341">
        <id>Q72AV5</id>
    </interactant>
    <interactant intactId="EBI-10068330">
        <id>Q72DX1</id>
        <label>gatA</label>
    </interactant>
    <organismsDiffer>false</organismsDiffer>
    <experiments>4</experiments>
</comment>
<comment type="similarity">
    <text evidence="1">Belongs to the GatB/GatE family. GatB subfamily.</text>
</comment>
<protein>
    <recommendedName>
        <fullName evidence="1">Aspartyl/glutamyl-tRNA(Asn/Gln) amidotransferase subunit B</fullName>
        <shortName evidence="1">Asp/Glu-ADT subunit B</shortName>
        <ecNumber evidence="1">6.3.5.-</ecNumber>
    </recommendedName>
</protein>
<accession>Q72AV5</accession>
<feature type="chain" id="PRO_0000241218" description="Aspartyl/glutamyl-tRNA(Asn/Gln) amidotransferase subunit B">
    <location>
        <begin position="1"/>
        <end position="476"/>
    </location>
</feature>
<dbReference type="EC" id="6.3.5.-" evidence="1"/>
<dbReference type="EMBL" id="AE017285">
    <property type="protein sequence ID" value="AAS96361.1"/>
    <property type="molecule type" value="Genomic_DNA"/>
</dbReference>
<dbReference type="RefSeq" id="WP_010939171.1">
    <property type="nucleotide sequence ID" value="NC_002937.3"/>
</dbReference>
<dbReference type="RefSeq" id="YP_011102.1">
    <property type="nucleotide sequence ID" value="NC_002937.3"/>
</dbReference>
<dbReference type="SMR" id="Q72AV5"/>
<dbReference type="IntAct" id="Q72AV5">
    <property type="interactions" value="3"/>
</dbReference>
<dbReference type="STRING" id="882.DVU_1885"/>
<dbReference type="PaxDb" id="882-DVU_1885"/>
<dbReference type="EnsemblBacteria" id="AAS96361">
    <property type="protein sequence ID" value="AAS96361"/>
    <property type="gene ID" value="DVU_1885"/>
</dbReference>
<dbReference type="KEGG" id="dvu:DVU_1885"/>
<dbReference type="PATRIC" id="fig|882.5.peg.1727"/>
<dbReference type="eggNOG" id="COG0064">
    <property type="taxonomic scope" value="Bacteria"/>
</dbReference>
<dbReference type="HOGENOM" id="CLU_019240_0_0_7"/>
<dbReference type="OrthoDB" id="9804078at2"/>
<dbReference type="PhylomeDB" id="Q72AV5"/>
<dbReference type="Proteomes" id="UP000002194">
    <property type="component" value="Chromosome"/>
</dbReference>
<dbReference type="GO" id="GO:0050566">
    <property type="term" value="F:asparaginyl-tRNA synthase (glutamine-hydrolyzing) activity"/>
    <property type="evidence" value="ECO:0007669"/>
    <property type="project" value="RHEA"/>
</dbReference>
<dbReference type="GO" id="GO:0005524">
    <property type="term" value="F:ATP binding"/>
    <property type="evidence" value="ECO:0007669"/>
    <property type="project" value="UniProtKB-KW"/>
</dbReference>
<dbReference type="GO" id="GO:0050567">
    <property type="term" value="F:glutaminyl-tRNA synthase (glutamine-hydrolyzing) activity"/>
    <property type="evidence" value="ECO:0007669"/>
    <property type="project" value="UniProtKB-UniRule"/>
</dbReference>
<dbReference type="GO" id="GO:0070681">
    <property type="term" value="P:glutaminyl-tRNAGln biosynthesis via transamidation"/>
    <property type="evidence" value="ECO:0007669"/>
    <property type="project" value="TreeGrafter"/>
</dbReference>
<dbReference type="GO" id="GO:0006412">
    <property type="term" value="P:translation"/>
    <property type="evidence" value="ECO:0007669"/>
    <property type="project" value="UniProtKB-UniRule"/>
</dbReference>
<dbReference type="FunFam" id="1.10.10.410:FF:000001">
    <property type="entry name" value="Aspartyl/glutamyl-tRNA(Asn/Gln) amidotransferase subunit B"/>
    <property type="match status" value="1"/>
</dbReference>
<dbReference type="Gene3D" id="1.10.10.410">
    <property type="match status" value="1"/>
</dbReference>
<dbReference type="Gene3D" id="1.10.150.380">
    <property type="entry name" value="GatB domain, N-terminal subdomain"/>
    <property type="match status" value="1"/>
</dbReference>
<dbReference type="HAMAP" id="MF_00121">
    <property type="entry name" value="GatB"/>
    <property type="match status" value="1"/>
</dbReference>
<dbReference type="InterPro" id="IPR017959">
    <property type="entry name" value="Asn/Gln-tRNA_amidoTrfase_suB/E"/>
</dbReference>
<dbReference type="InterPro" id="IPR006075">
    <property type="entry name" value="Asn/Gln-tRNA_Trfase_suB/E_cat"/>
</dbReference>
<dbReference type="InterPro" id="IPR018027">
    <property type="entry name" value="Asn/Gln_amidotransferase"/>
</dbReference>
<dbReference type="InterPro" id="IPR003789">
    <property type="entry name" value="Asn/Gln_tRNA_amidoTrase-B-like"/>
</dbReference>
<dbReference type="InterPro" id="IPR004413">
    <property type="entry name" value="GatB"/>
</dbReference>
<dbReference type="InterPro" id="IPR042114">
    <property type="entry name" value="GatB_C_1"/>
</dbReference>
<dbReference type="InterPro" id="IPR023168">
    <property type="entry name" value="GatB_Yqey_C_2"/>
</dbReference>
<dbReference type="InterPro" id="IPR017958">
    <property type="entry name" value="Gln-tRNA_amidoTrfase_suB_CS"/>
</dbReference>
<dbReference type="InterPro" id="IPR014746">
    <property type="entry name" value="Gln_synth/guanido_kin_cat_dom"/>
</dbReference>
<dbReference type="NCBIfam" id="TIGR00133">
    <property type="entry name" value="gatB"/>
    <property type="match status" value="1"/>
</dbReference>
<dbReference type="NCBIfam" id="NF004012">
    <property type="entry name" value="PRK05477.1-2"/>
    <property type="match status" value="1"/>
</dbReference>
<dbReference type="NCBIfam" id="NF004014">
    <property type="entry name" value="PRK05477.1-4"/>
    <property type="match status" value="1"/>
</dbReference>
<dbReference type="NCBIfam" id="NF004015">
    <property type="entry name" value="PRK05477.1-5"/>
    <property type="match status" value="1"/>
</dbReference>
<dbReference type="PANTHER" id="PTHR11659">
    <property type="entry name" value="GLUTAMYL-TRNA GLN AMIDOTRANSFERASE SUBUNIT B MITOCHONDRIAL AND PROKARYOTIC PET112-RELATED"/>
    <property type="match status" value="1"/>
</dbReference>
<dbReference type="PANTHER" id="PTHR11659:SF0">
    <property type="entry name" value="GLUTAMYL-TRNA(GLN) AMIDOTRANSFERASE SUBUNIT B, MITOCHONDRIAL"/>
    <property type="match status" value="1"/>
</dbReference>
<dbReference type="Pfam" id="PF02934">
    <property type="entry name" value="GatB_N"/>
    <property type="match status" value="1"/>
</dbReference>
<dbReference type="Pfam" id="PF02637">
    <property type="entry name" value="GatB_Yqey"/>
    <property type="match status" value="1"/>
</dbReference>
<dbReference type="SMART" id="SM00845">
    <property type="entry name" value="GatB_Yqey"/>
    <property type="match status" value="1"/>
</dbReference>
<dbReference type="SUPFAM" id="SSF89095">
    <property type="entry name" value="GatB/YqeY motif"/>
    <property type="match status" value="1"/>
</dbReference>
<dbReference type="SUPFAM" id="SSF55931">
    <property type="entry name" value="Glutamine synthetase/guanido kinase"/>
    <property type="match status" value="1"/>
</dbReference>
<dbReference type="PROSITE" id="PS01234">
    <property type="entry name" value="GATB"/>
    <property type="match status" value="1"/>
</dbReference>
<evidence type="ECO:0000255" key="1">
    <source>
        <dbReference type="HAMAP-Rule" id="MF_00121"/>
    </source>
</evidence>
<organism>
    <name type="scientific">Nitratidesulfovibrio vulgaris (strain ATCC 29579 / DSM 644 / CCUG 34227 / NCIMB 8303 / VKM B-1760 / Hildenborough)</name>
    <name type="common">Desulfovibrio vulgaris</name>
    <dbReference type="NCBI Taxonomy" id="882"/>
    <lineage>
        <taxon>Bacteria</taxon>
        <taxon>Pseudomonadati</taxon>
        <taxon>Thermodesulfobacteriota</taxon>
        <taxon>Desulfovibrionia</taxon>
        <taxon>Desulfovibrionales</taxon>
        <taxon>Desulfovibrionaceae</taxon>
        <taxon>Nitratidesulfovibrio</taxon>
    </lineage>
</organism>
<gene>
    <name evidence="1" type="primary">gatB</name>
    <name type="ordered locus">DVU_1885</name>
</gene>
<keyword id="KW-0067">ATP-binding</keyword>
<keyword id="KW-0436">Ligase</keyword>
<keyword id="KW-0547">Nucleotide-binding</keyword>
<keyword id="KW-0648">Protein biosynthesis</keyword>
<keyword id="KW-1185">Reference proteome</keyword>
<name>GATB_NITV2</name>